<proteinExistence type="inferred from homology"/>
<name>TYSY_STAEP</name>
<dbReference type="EC" id="2.1.1.45" evidence="1"/>
<dbReference type="EMBL" id="Z48233">
    <property type="protein sequence ID" value="CAA88268.1"/>
    <property type="molecule type" value="Genomic_DNA"/>
</dbReference>
<dbReference type="PIR" id="S57628">
    <property type="entry name" value="S57628"/>
</dbReference>
<dbReference type="SMR" id="P0C0M4"/>
<dbReference type="UniPathway" id="UPA00575"/>
<dbReference type="GO" id="GO:0005829">
    <property type="term" value="C:cytosol"/>
    <property type="evidence" value="ECO:0007669"/>
    <property type="project" value="TreeGrafter"/>
</dbReference>
<dbReference type="GO" id="GO:0004799">
    <property type="term" value="F:thymidylate synthase activity"/>
    <property type="evidence" value="ECO:0007669"/>
    <property type="project" value="UniProtKB-EC"/>
</dbReference>
<dbReference type="GO" id="GO:0006231">
    <property type="term" value="P:dTMP biosynthetic process"/>
    <property type="evidence" value="ECO:0007669"/>
    <property type="project" value="InterPro"/>
</dbReference>
<dbReference type="GO" id="GO:0006235">
    <property type="term" value="P:dTTP biosynthetic process"/>
    <property type="evidence" value="ECO:0007669"/>
    <property type="project" value="UniProtKB-UniPathway"/>
</dbReference>
<dbReference type="GO" id="GO:0032259">
    <property type="term" value="P:methylation"/>
    <property type="evidence" value="ECO:0007669"/>
    <property type="project" value="UniProtKB-KW"/>
</dbReference>
<dbReference type="Gene3D" id="3.30.572.10">
    <property type="entry name" value="Thymidylate synthase/dCMP hydroxymethylase domain"/>
    <property type="match status" value="1"/>
</dbReference>
<dbReference type="InterPro" id="IPR045097">
    <property type="entry name" value="Thymidate_synth/dCMP_Mease"/>
</dbReference>
<dbReference type="InterPro" id="IPR023451">
    <property type="entry name" value="Thymidate_synth/dCMP_Mease_dom"/>
</dbReference>
<dbReference type="InterPro" id="IPR036926">
    <property type="entry name" value="Thymidate_synth/dCMP_Mease_sf"/>
</dbReference>
<dbReference type="InterPro" id="IPR000398">
    <property type="entry name" value="Thymidylate_synthase"/>
</dbReference>
<dbReference type="NCBIfam" id="TIGR03284">
    <property type="entry name" value="thym_sym"/>
    <property type="match status" value="1"/>
</dbReference>
<dbReference type="PANTHER" id="PTHR11548:SF9">
    <property type="entry name" value="THYMIDYLATE SYNTHASE"/>
    <property type="match status" value="1"/>
</dbReference>
<dbReference type="PANTHER" id="PTHR11548">
    <property type="entry name" value="THYMIDYLATE SYNTHASE 1"/>
    <property type="match status" value="1"/>
</dbReference>
<dbReference type="Pfam" id="PF00303">
    <property type="entry name" value="Thymidylat_synt"/>
    <property type="match status" value="1"/>
</dbReference>
<dbReference type="SUPFAM" id="SSF55831">
    <property type="entry name" value="Thymidylate synthase/dCMP hydroxymethylase"/>
    <property type="match status" value="1"/>
</dbReference>
<protein>
    <recommendedName>
        <fullName evidence="1">Thymidylate synthase</fullName>
        <shortName evidence="1">TS</shortName>
        <shortName evidence="1">TSase</shortName>
        <ecNumber evidence="1">2.1.1.45</ecNumber>
    </recommendedName>
</protein>
<comment type="function">
    <text evidence="1">Catalyzes the reductive methylation of 2'-deoxyuridine-5'-monophosphate (dUMP) to 2'-deoxythymidine-5'-monophosphate (dTMP) while utilizing 5,10-methylenetetrahydrofolate (mTHF) as the methyl donor and reductant in the reaction, yielding dihydrofolate (DHF) as a by-product. This enzymatic reaction provides an intracellular de novo source of dTMP, an essential precursor for DNA biosynthesis.</text>
</comment>
<comment type="catalytic activity">
    <reaction evidence="1">
        <text>dUMP + (6R)-5,10-methylene-5,6,7,8-tetrahydrofolate = 7,8-dihydrofolate + dTMP</text>
        <dbReference type="Rhea" id="RHEA:12104"/>
        <dbReference type="ChEBI" id="CHEBI:15636"/>
        <dbReference type="ChEBI" id="CHEBI:57451"/>
        <dbReference type="ChEBI" id="CHEBI:63528"/>
        <dbReference type="ChEBI" id="CHEBI:246422"/>
        <dbReference type="EC" id="2.1.1.45"/>
    </reaction>
</comment>
<comment type="pathway">
    <text evidence="1">Pyrimidine metabolism; dTTP biosynthesis.</text>
</comment>
<comment type="subunit">
    <text evidence="1">Homodimer.</text>
</comment>
<comment type="subcellular location">
    <subcellularLocation>
        <location evidence="1">Cytoplasm</location>
    </subcellularLocation>
</comment>
<comment type="similarity">
    <text evidence="2">Belongs to the thymidylate synthase family. Bacterial-type ThyA subfamily.</text>
</comment>
<gene>
    <name evidence="1" type="primary">thyA</name>
    <name type="synonym">thyE</name>
    <name type="synonym">thyF</name>
</gene>
<sequence>SADIFLGVPFNIASYALLTHLVAKECGLEVGEFIHTFGDAHIYSNHMDAIHTQLSRDSYLPPQLKINTDKSIFDINYEDLELINYESHPAIKAPIAV</sequence>
<reference key="1">
    <citation type="journal article" date="1995" name="J. Bacteriol.">
        <title>Characterization of the gene for the chromosomal dihydrofolate reductase (DHFR) of Staphylococcus epidermidis ATCC 14990: the origin of the trimethoprim-resistant S1 DHFR from Staphylococcus aureus?</title>
        <authorList>
            <person name="Dale G.E."/>
            <person name="Broger C."/>
            <person name="Hartman P.G."/>
            <person name="Langen H."/>
            <person name="Page M.G.P."/>
            <person name="Then R.L."/>
            <person name="Stueber D."/>
        </authorList>
    </citation>
    <scope>NUCLEOTIDE SEQUENCE [GENOMIC DNA]</scope>
    <source>
        <strain>ATCC 14990 / DSM 20044 / CIP 81.55 / NCTC 11047</strain>
    </source>
</reference>
<feature type="chain" id="PRO_0000141024" description="Thymidylate synthase">
    <location>
        <begin position="1" status="less than"/>
        <end position="97"/>
    </location>
</feature>
<feature type="binding site" evidence="1">
    <location>
        <begin position="1"/>
        <end position="3"/>
    </location>
    <ligand>
        <name>dUMP</name>
        <dbReference type="ChEBI" id="CHEBI:246422"/>
    </ligand>
</feature>
<feature type="binding site" evidence="1">
    <location>
        <position position="3"/>
    </location>
    <ligand>
        <name>(6R)-5,10-methylene-5,6,7,8-tetrahydrofolate</name>
        <dbReference type="ChEBI" id="CHEBI:15636"/>
    </ligand>
</feature>
<feature type="binding site" evidence="1">
    <location>
        <position position="11"/>
    </location>
    <ligand>
        <name>dUMP</name>
        <dbReference type="ChEBI" id="CHEBI:246422"/>
    </ligand>
</feature>
<feature type="binding site" evidence="1">
    <location>
        <begin position="41"/>
        <end position="43"/>
    </location>
    <ligand>
        <name>dUMP</name>
        <dbReference type="ChEBI" id="CHEBI:246422"/>
    </ligand>
</feature>
<feature type="binding site" evidence="1">
    <location>
        <position position="96"/>
    </location>
    <ligand>
        <name>(6R)-5,10-methylene-5,6,7,8-tetrahydrofolate</name>
        <dbReference type="ChEBI" id="CHEBI:15636"/>
    </ligand>
</feature>
<feature type="non-terminal residue">
    <location>
        <position position="1"/>
    </location>
</feature>
<keyword id="KW-0963">Cytoplasm</keyword>
<keyword id="KW-0489">Methyltransferase</keyword>
<keyword id="KW-0545">Nucleotide biosynthesis</keyword>
<keyword id="KW-0808">Transferase</keyword>
<organism>
    <name type="scientific">Staphylococcus epidermidis</name>
    <dbReference type="NCBI Taxonomy" id="1282"/>
    <lineage>
        <taxon>Bacteria</taxon>
        <taxon>Bacillati</taxon>
        <taxon>Bacillota</taxon>
        <taxon>Bacilli</taxon>
        <taxon>Bacillales</taxon>
        <taxon>Staphylococcaceae</taxon>
        <taxon>Staphylococcus</taxon>
    </lineage>
</organism>
<accession>P0C0M4</accession>
<accession>P0A0M4</accession>
<accession>P13954</accession>
<accession>Q59907</accession>
<evidence type="ECO:0000250" key="1">
    <source>
        <dbReference type="UniProtKB" id="P0A884"/>
    </source>
</evidence>
<evidence type="ECO:0000305" key="2"/>